<gene>
    <name type="primary">MT-CYB</name>
    <name type="synonym">COB</name>
    <name type="synonym">CYTB</name>
    <name type="synonym">MTCYB</name>
</gene>
<feature type="chain" id="PRO_0000061231" description="Cytochrome b">
    <location>
        <begin position="1"/>
        <end position="379"/>
    </location>
</feature>
<feature type="transmembrane region" description="Helical" evidence="2">
    <location>
        <begin position="33"/>
        <end position="53"/>
    </location>
</feature>
<feature type="transmembrane region" description="Helical" evidence="2">
    <location>
        <begin position="77"/>
        <end position="98"/>
    </location>
</feature>
<feature type="transmembrane region" description="Helical" evidence="2">
    <location>
        <begin position="113"/>
        <end position="133"/>
    </location>
</feature>
<feature type="transmembrane region" description="Helical" evidence="2">
    <location>
        <begin position="178"/>
        <end position="198"/>
    </location>
</feature>
<feature type="transmembrane region" description="Helical" evidence="2">
    <location>
        <begin position="226"/>
        <end position="246"/>
    </location>
</feature>
<feature type="transmembrane region" description="Helical" evidence="2">
    <location>
        <begin position="288"/>
        <end position="308"/>
    </location>
</feature>
<feature type="transmembrane region" description="Helical" evidence="2">
    <location>
        <begin position="320"/>
        <end position="340"/>
    </location>
</feature>
<feature type="transmembrane region" description="Helical" evidence="2">
    <location>
        <begin position="347"/>
        <end position="367"/>
    </location>
</feature>
<feature type="binding site" description="axial binding residue" evidence="2">
    <location>
        <position position="83"/>
    </location>
    <ligand>
        <name>heme b</name>
        <dbReference type="ChEBI" id="CHEBI:60344"/>
        <label>b562</label>
    </ligand>
    <ligandPart>
        <name>Fe</name>
        <dbReference type="ChEBI" id="CHEBI:18248"/>
    </ligandPart>
</feature>
<feature type="binding site" description="axial binding residue" evidence="2">
    <location>
        <position position="97"/>
    </location>
    <ligand>
        <name>heme b</name>
        <dbReference type="ChEBI" id="CHEBI:60344"/>
        <label>b566</label>
    </ligand>
    <ligandPart>
        <name>Fe</name>
        <dbReference type="ChEBI" id="CHEBI:18248"/>
    </ligandPart>
</feature>
<feature type="binding site" description="axial binding residue" evidence="2">
    <location>
        <position position="182"/>
    </location>
    <ligand>
        <name>heme b</name>
        <dbReference type="ChEBI" id="CHEBI:60344"/>
        <label>b562</label>
    </ligand>
    <ligandPart>
        <name>Fe</name>
        <dbReference type="ChEBI" id="CHEBI:18248"/>
    </ligandPart>
</feature>
<feature type="binding site" description="axial binding residue" evidence="2">
    <location>
        <position position="196"/>
    </location>
    <ligand>
        <name>heme b</name>
        <dbReference type="ChEBI" id="CHEBI:60344"/>
        <label>b566</label>
    </ligand>
    <ligandPart>
        <name>Fe</name>
        <dbReference type="ChEBI" id="CHEBI:18248"/>
    </ligandPart>
</feature>
<feature type="binding site" evidence="2">
    <location>
        <position position="201"/>
    </location>
    <ligand>
        <name>a ubiquinone</name>
        <dbReference type="ChEBI" id="CHEBI:16389"/>
    </ligand>
</feature>
<protein>
    <recommendedName>
        <fullName>Cytochrome b</fullName>
    </recommendedName>
    <alternativeName>
        <fullName>Complex III subunit 3</fullName>
    </alternativeName>
    <alternativeName>
        <fullName>Complex III subunit III</fullName>
    </alternativeName>
    <alternativeName>
        <fullName>Cytochrome b-c1 complex subunit 3</fullName>
    </alternativeName>
    <alternativeName>
        <fullName>Ubiquinol-cytochrome-c reductase complex cytochrome b subunit</fullName>
    </alternativeName>
</protein>
<accession>Q957C1</accession>
<evidence type="ECO:0000250" key="1"/>
<evidence type="ECO:0000250" key="2">
    <source>
        <dbReference type="UniProtKB" id="P00157"/>
    </source>
</evidence>
<evidence type="ECO:0000255" key="3">
    <source>
        <dbReference type="PROSITE-ProRule" id="PRU00967"/>
    </source>
</evidence>
<evidence type="ECO:0000255" key="4">
    <source>
        <dbReference type="PROSITE-ProRule" id="PRU00968"/>
    </source>
</evidence>
<dbReference type="EMBL" id="AF376841">
    <property type="protein sequence ID" value="AAK57660.1"/>
    <property type="molecule type" value="Genomic_DNA"/>
</dbReference>
<dbReference type="GO" id="GO:0005743">
    <property type="term" value="C:mitochondrial inner membrane"/>
    <property type="evidence" value="ECO:0007669"/>
    <property type="project" value="UniProtKB-SubCell"/>
</dbReference>
<dbReference type="GO" id="GO:0045275">
    <property type="term" value="C:respiratory chain complex III"/>
    <property type="evidence" value="ECO:0007669"/>
    <property type="project" value="InterPro"/>
</dbReference>
<dbReference type="GO" id="GO:0046872">
    <property type="term" value="F:metal ion binding"/>
    <property type="evidence" value="ECO:0007669"/>
    <property type="project" value="UniProtKB-KW"/>
</dbReference>
<dbReference type="GO" id="GO:0008121">
    <property type="term" value="F:ubiquinol-cytochrome-c reductase activity"/>
    <property type="evidence" value="ECO:0007669"/>
    <property type="project" value="InterPro"/>
</dbReference>
<dbReference type="GO" id="GO:0006122">
    <property type="term" value="P:mitochondrial electron transport, ubiquinol to cytochrome c"/>
    <property type="evidence" value="ECO:0007669"/>
    <property type="project" value="TreeGrafter"/>
</dbReference>
<dbReference type="CDD" id="cd00290">
    <property type="entry name" value="cytochrome_b_C"/>
    <property type="match status" value="1"/>
</dbReference>
<dbReference type="CDD" id="cd00284">
    <property type="entry name" value="Cytochrome_b_N"/>
    <property type="match status" value="1"/>
</dbReference>
<dbReference type="FunFam" id="1.20.810.10:FF:000002">
    <property type="entry name" value="Cytochrome b"/>
    <property type="match status" value="1"/>
</dbReference>
<dbReference type="Gene3D" id="1.20.810.10">
    <property type="entry name" value="Cytochrome Bc1 Complex, Chain C"/>
    <property type="match status" value="1"/>
</dbReference>
<dbReference type="InterPro" id="IPR005798">
    <property type="entry name" value="Cyt_b/b6_C"/>
</dbReference>
<dbReference type="InterPro" id="IPR036150">
    <property type="entry name" value="Cyt_b/b6_C_sf"/>
</dbReference>
<dbReference type="InterPro" id="IPR005797">
    <property type="entry name" value="Cyt_b/b6_N"/>
</dbReference>
<dbReference type="InterPro" id="IPR027387">
    <property type="entry name" value="Cytb/b6-like_sf"/>
</dbReference>
<dbReference type="InterPro" id="IPR030689">
    <property type="entry name" value="Cytochrome_b"/>
</dbReference>
<dbReference type="InterPro" id="IPR048260">
    <property type="entry name" value="Cytochrome_b_C_euk/bac"/>
</dbReference>
<dbReference type="InterPro" id="IPR048259">
    <property type="entry name" value="Cytochrome_b_N_euk/bac"/>
</dbReference>
<dbReference type="InterPro" id="IPR016174">
    <property type="entry name" value="Di-haem_cyt_TM"/>
</dbReference>
<dbReference type="PANTHER" id="PTHR19271">
    <property type="entry name" value="CYTOCHROME B"/>
    <property type="match status" value="1"/>
</dbReference>
<dbReference type="PANTHER" id="PTHR19271:SF16">
    <property type="entry name" value="CYTOCHROME B"/>
    <property type="match status" value="1"/>
</dbReference>
<dbReference type="Pfam" id="PF00032">
    <property type="entry name" value="Cytochrom_B_C"/>
    <property type="match status" value="1"/>
</dbReference>
<dbReference type="Pfam" id="PF00033">
    <property type="entry name" value="Cytochrome_B"/>
    <property type="match status" value="1"/>
</dbReference>
<dbReference type="PIRSF" id="PIRSF038885">
    <property type="entry name" value="COB"/>
    <property type="match status" value="1"/>
</dbReference>
<dbReference type="SUPFAM" id="SSF81648">
    <property type="entry name" value="a domain/subunit of cytochrome bc1 complex (Ubiquinol-cytochrome c reductase)"/>
    <property type="match status" value="1"/>
</dbReference>
<dbReference type="SUPFAM" id="SSF81342">
    <property type="entry name" value="Transmembrane di-heme cytochromes"/>
    <property type="match status" value="1"/>
</dbReference>
<dbReference type="PROSITE" id="PS51003">
    <property type="entry name" value="CYTB_CTER"/>
    <property type="match status" value="1"/>
</dbReference>
<dbReference type="PROSITE" id="PS51002">
    <property type="entry name" value="CYTB_NTER"/>
    <property type="match status" value="1"/>
</dbReference>
<sequence>MTNIRKSXPLMKIINSSFIDLPAPSNISSWWNFGSLLGICLALQILTGLFLAMHYTSDTATAFNSVTHICRDVNYGWVLRYLHANGASMFFICLYLHVGRGIYYGSYMYTETWNVGVILLFAVMATAFMGYVLPWGQMSFWGATVITNLLSAIPYIGTNLVKWIWGGFSVDKATLTRFFAFHFLLPFVISAMVMVHLLFLHETGSNNPTGIPSNMDMIPFHPYYTIKDILGLLLMITVLLMLVLFSPDMLGDPDNYMPANPLNTPPHIKPEWYFLFAYAILRSIPNKLGGVLALVLSILILIIIPLLHTSKQRSMTFRPLSQCLFWLLVADLFTLTWIGGQPVEHPYVIIGQLASILYFSIIXILMPXISFAENHLLKW</sequence>
<geneLocation type="mitochondrion"/>
<keyword id="KW-0249">Electron transport</keyword>
<keyword id="KW-0349">Heme</keyword>
<keyword id="KW-0408">Iron</keyword>
<keyword id="KW-0472">Membrane</keyword>
<keyword id="KW-0479">Metal-binding</keyword>
<keyword id="KW-0496">Mitochondrion</keyword>
<keyword id="KW-0999">Mitochondrion inner membrane</keyword>
<keyword id="KW-0679">Respiratory chain</keyword>
<keyword id="KW-0812">Transmembrane</keyword>
<keyword id="KW-1133">Transmembrane helix</keyword>
<keyword id="KW-0813">Transport</keyword>
<keyword id="KW-0830">Ubiquinone</keyword>
<comment type="function">
    <text evidence="2">Component of the ubiquinol-cytochrome c reductase complex (complex III or cytochrome b-c1 complex) that is part of the mitochondrial respiratory chain. The b-c1 complex mediates electron transfer from ubiquinol to cytochrome c. Contributes to the generation of a proton gradient across the mitochondrial membrane that is then used for ATP synthesis.</text>
</comment>
<comment type="cofactor">
    <cofactor evidence="2">
        <name>heme b</name>
        <dbReference type="ChEBI" id="CHEBI:60344"/>
    </cofactor>
    <text evidence="2">Binds 2 heme b groups non-covalently.</text>
</comment>
<comment type="subunit">
    <text evidence="2">The cytochrome bc1 complex contains 11 subunits: 3 respiratory subunits (MT-CYB, CYC1 and UQCRFS1), 2 core proteins (UQCRC1 and UQCRC2) and 6 low-molecular weight proteins (UQCRH/QCR6, UQCRB/QCR7, UQCRQ/QCR8, UQCR10/QCR9, UQCR11/QCR10 and a cleavage product of UQCRFS1). This cytochrome bc1 complex then forms a dimer.</text>
</comment>
<comment type="subcellular location">
    <subcellularLocation>
        <location evidence="2">Mitochondrion inner membrane</location>
        <topology evidence="2">Multi-pass membrane protein</topology>
    </subcellularLocation>
</comment>
<comment type="miscellaneous">
    <text evidence="1">Heme 1 (or BL or b562) is low-potential and absorbs at about 562 nm, and heme 2 (or BH or b566) is high-potential and absorbs at about 566 nm.</text>
</comment>
<comment type="similarity">
    <text evidence="3 4">Belongs to the cytochrome b family.</text>
</comment>
<comment type="caution">
    <text evidence="2">The full-length protein contains only eight transmembrane helices, not nine as predicted by bioinformatics tools.</text>
</comment>
<reference key="1">
    <citation type="journal article" date="2001" name="Mol. Phylogenet. Evol.">
        <title>Molecular systematics of bats of the genus Myotis (Vespertilionidae) suggests deterministic ecomorphological convergences.</title>
        <authorList>
            <person name="Ruedi M."/>
            <person name="Mayer F."/>
        </authorList>
    </citation>
    <scope>NUCLEOTIDE SEQUENCE [GENOMIC DNA]</scope>
    <source>
        <strain>Isolate 1215</strain>
    </source>
</reference>
<proteinExistence type="inferred from homology"/>
<organism>
    <name type="scientific">Myotis oxygnathus</name>
    <name type="common">Lesser mouse-eared bat</name>
    <name type="synonym">Myotis blythii oxygnathus</name>
    <dbReference type="NCBI Taxonomy" id="412095"/>
    <lineage>
        <taxon>Eukaryota</taxon>
        <taxon>Metazoa</taxon>
        <taxon>Chordata</taxon>
        <taxon>Craniata</taxon>
        <taxon>Vertebrata</taxon>
        <taxon>Euteleostomi</taxon>
        <taxon>Mammalia</taxon>
        <taxon>Eutheria</taxon>
        <taxon>Laurasiatheria</taxon>
        <taxon>Chiroptera</taxon>
        <taxon>Yangochiroptera</taxon>
        <taxon>Vespertilionidae</taxon>
        <taxon>Myotis</taxon>
    </lineage>
</organism>
<name>CYB_MYOOY</name>